<organism>
    <name type="scientific">Falco peregrinus</name>
    <name type="common">Peregrine falcon</name>
    <dbReference type="NCBI Taxonomy" id="8954"/>
    <lineage>
        <taxon>Eukaryota</taxon>
        <taxon>Metazoa</taxon>
        <taxon>Chordata</taxon>
        <taxon>Craniata</taxon>
        <taxon>Vertebrata</taxon>
        <taxon>Euteleostomi</taxon>
        <taxon>Archelosauria</taxon>
        <taxon>Archosauria</taxon>
        <taxon>Dinosauria</taxon>
        <taxon>Saurischia</taxon>
        <taxon>Theropoda</taxon>
        <taxon>Coelurosauria</taxon>
        <taxon>Aves</taxon>
        <taxon>Neognathae</taxon>
        <taxon>Neoaves</taxon>
        <taxon>Telluraves</taxon>
        <taxon>Australaves</taxon>
        <taxon>Falconiformes</taxon>
        <taxon>Falconidae</taxon>
        <taxon>Falco</taxon>
    </lineage>
</organism>
<comment type="function">
    <text evidence="2">Component of the ubiquinol-cytochrome c reductase complex (complex III or cytochrome b-c1 complex) that is part of the mitochondrial respiratory chain. The b-c1 complex mediates electron transfer from ubiquinol to cytochrome c. Contributes to the generation of a proton gradient across the mitochondrial membrane that is then used for ATP synthesis.</text>
</comment>
<comment type="cofactor">
    <cofactor evidence="2">
        <name>heme b</name>
        <dbReference type="ChEBI" id="CHEBI:60344"/>
    </cofactor>
    <text evidence="2">Binds 2 heme b groups non-covalently.</text>
</comment>
<comment type="subunit">
    <text evidence="2">The cytochrome bc1 complex contains 11 subunits: 3 respiratory subunits (MT-CYB, CYC1 and UQCRFS1), 2 core proteins (UQCRC1 and UQCRC2) and 6 low-molecular weight proteins (UQCRH/QCR6, UQCRB/QCR7, UQCRQ/QCR8, UQCR10/QCR9, UQCR11/QCR10 and a cleavage product of UQCRFS1). This cytochrome bc1 complex then forms a dimer.</text>
</comment>
<comment type="subcellular location">
    <subcellularLocation>
        <location evidence="2">Mitochondrion inner membrane</location>
        <topology evidence="2">Multi-pass membrane protein</topology>
    </subcellularLocation>
</comment>
<comment type="miscellaneous">
    <text evidence="1">Heme 1 (or BL or b562) is low-potential and absorbs at about 562 nm, and heme 2 (or BH or b566) is high-potential and absorbs at about 566 nm.</text>
</comment>
<comment type="similarity">
    <text evidence="3 4">Belongs to the cytochrome b family.</text>
</comment>
<comment type="caution">
    <text evidence="2">The full-length protein contains only eight transmembrane helices, not nine as predicted by bioinformatics tools.</text>
</comment>
<sequence>MAPNIRKSHPLVKMINNSLIDLPTPPNISIWWNFGSLLGICLATQILTGLLLAMHYTADTTLAFSSVAHTCRNVQYGWLIRNLHANGASLFFICIYMHIGRGIYYGSYLYKETWNTGIILLLTLMATAFVGYVLPWGQMSFWGATVITNLFSAIPYIGQTLVEWAWGGFSVDNPTLTRFFALHFLLPFLIAGLTLIHLTFLHESGSNNPLGITSNCDKIPFHPYYSLKDILGFMLMYLPLMTLALFTPNLLGDPENFTPANPLVTPPHIKPEWYFLFAYAILRSIPNKLGGVLALAASVLILFLSPLLHKSKQRTMTFRPLSQSLFWLLVTNLLILTWVGSQPVEHPFIIIGQLASLSYFTTLLILLPLTGALENKILNY</sequence>
<proteinExistence type="inferred from homology"/>
<geneLocation type="mitochondrion"/>
<name>CYB_FALPE</name>
<protein>
    <recommendedName>
        <fullName>Cytochrome b</fullName>
    </recommendedName>
    <alternativeName>
        <fullName>Complex III subunit 3</fullName>
    </alternativeName>
    <alternativeName>
        <fullName>Complex III subunit III</fullName>
    </alternativeName>
    <alternativeName>
        <fullName>Cytochrome b-c1 complex subunit 3</fullName>
    </alternativeName>
    <alternativeName>
        <fullName>Ubiquinol-cytochrome-c reductase complex cytochrome b subunit</fullName>
    </alternativeName>
</protein>
<keyword id="KW-0249">Electron transport</keyword>
<keyword id="KW-0349">Heme</keyword>
<keyword id="KW-0408">Iron</keyword>
<keyword id="KW-0472">Membrane</keyword>
<keyword id="KW-0479">Metal-binding</keyword>
<keyword id="KW-0496">Mitochondrion</keyword>
<keyword id="KW-0999">Mitochondrion inner membrane</keyword>
<keyword id="KW-0679">Respiratory chain</keyword>
<keyword id="KW-0812">Transmembrane</keyword>
<keyword id="KW-1133">Transmembrane helix</keyword>
<keyword id="KW-0813">Transport</keyword>
<keyword id="KW-0830">Ubiquinone</keyword>
<feature type="chain" id="PRO_0000060969" description="Cytochrome b">
    <location>
        <begin position="1"/>
        <end position="380"/>
    </location>
</feature>
<feature type="transmembrane region" description="Helical" evidence="2">
    <location>
        <begin position="34"/>
        <end position="54"/>
    </location>
</feature>
<feature type="transmembrane region" description="Helical" evidence="2">
    <location>
        <begin position="78"/>
        <end position="99"/>
    </location>
</feature>
<feature type="transmembrane region" description="Helical" evidence="2">
    <location>
        <begin position="114"/>
        <end position="134"/>
    </location>
</feature>
<feature type="transmembrane region" description="Helical" evidence="2">
    <location>
        <begin position="179"/>
        <end position="199"/>
    </location>
</feature>
<feature type="transmembrane region" description="Helical" evidence="2">
    <location>
        <begin position="227"/>
        <end position="247"/>
    </location>
</feature>
<feature type="transmembrane region" description="Helical" evidence="2">
    <location>
        <begin position="289"/>
        <end position="309"/>
    </location>
</feature>
<feature type="transmembrane region" description="Helical" evidence="2">
    <location>
        <begin position="321"/>
        <end position="341"/>
    </location>
</feature>
<feature type="transmembrane region" description="Helical" evidence="2">
    <location>
        <begin position="348"/>
        <end position="368"/>
    </location>
</feature>
<feature type="binding site" description="axial binding residue" evidence="2">
    <location>
        <position position="84"/>
    </location>
    <ligand>
        <name>heme b</name>
        <dbReference type="ChEBI" id="CHEBI:60344"/>
        <label>b562</label>
    </ligand>
    <ligandPart>
        <name>Fe</name>
        <dbReference type="ChEBI" id="CHEBI:18248"/>
    </ligandPart>
</feature>
<feature type="binding site" description="axial binding residue" evidence="2">
    <location>
        <position position="98"/>
    </location>
    <ligand>
        <name>heme b</name>
        <dbReference type="ChEBI" id="CHEBI:60344"/>
        <label>b566</label>
    </ligand>
    <ligandPart>
        <name>Fe</name>
        <dbReference type="ChEBI" id="CHEBI:18248"/>
    </ligandPart>
</feature>
<feature type="binding site" description="axial binding residue" evidence="2">
    <location>
        <position position="183"/>
    </location>
    <ligand>
        <name>heme b</name>
        <dbReference type="ChEBI" id="CHEBI:60344"/>
        <label>b562</label>
    </ligand>
    <ligandPart>
        <name>Fe</name>
        <dbReference type="ChEBI" id="CHEBI:18248"/>
    </ligandPart>
</feature>
<feature type="binding site" description="axial binding residue" evidence="2">
    <location>
        <position position="197"/>
    </location>
    <ligand>
        <name>heme b</name>
        <dbReference type="ChEBI" id="CHEBI:60344"/>
        <label>b566</label>
    </ligand>
    <ligandPart>
        <name>Fe</name>
        <dbReference type="ChEBI" id="CHEBI:18248"/>
    </ligandPart>
</feature>
<feature type="binding site" evidence="2">
    <location>
        <position position="202"/>
    </location>
    <ligand>
        <name>a ubiquinone</name>
        <dbReference type="ChEBI" id="CHEBI:16389"/>
    </ligand>
</feature>
<accession>O21166</accession>
<gene>
    <name type="primary">MT-CYB</name>
    <name type="synonym">COB</name>
    <name type="synonym">CYTB</name>
    <name type="synonym">MTCYB</name>
</gene>
<evidence type="ECO:0000250" key="1"/>
<evidence type="ECO:0000250" key="2">
    <source>
        <dbReference type="UniProtKB" id="P00157"/>
    </source>
</evidence>
<evidence type="ECO:0000255" key="3">
    <source>
        <dbReference type="PROSITE-ProRule" id="PRU00967"/>
    </source>
</evidence>
<evidence type="ECO:0000255" key="4">
    <source>
        <dbReference type="PROSITE-ProRule" id="PRU00968"/>
    </source>
</evidence>
<reference key="1">
    <citation type="journal article" date="1997" name="Mol. Phylogenet. Evol.">
        <title>Correlation of functional domains and rates of nucleotide substitution in cytochrome b.</title>
        <authorList>
            <person name="Griffiths C.S."/>
        </authorList>
    </citation>
    <scope>NUCLEOTIDE SEQUENCE [GENOMIC DNA]</scope>
</reference>
<dbReference type="EMBL" id="U83307">
    <property type="protein sequence ID" value="AAC60233.1"/>
    <property type="molecule type" value="Genomic_DNA"/>
</dbReference>
<dbReference type="SMR" id="O21166"/>
<dbReference type="GO" id="GO:0005743">
    <property type="term" value="C:mitochondrial inner membrane"/>
    <property type="evidence" value="ECO:0007669"/>
    <property type="project" value="UniProtKB-SubCell"/>
</dbReference>
<dbReference type="GO" id="GO:0045275">
    <property type="term" value="C:respiratory chain complex III"/>
    <property type="evidence" value="ECO:0007669"/>
    <property type="project" value="InterPro"/>
</dbReference>
<dbReference type="GO" id="GO:0046872">
    <property type="term" value="F:metal ion binding"/>
    <property type="evidence" value="ECO:0007669"/>
    <property type="project" value="UniProtKB-KW"/>
</dbReference>
<dbReference type="GO" id="GO:0008121">
    <property type="term" value="F:ubiquinol-cytochrome-c reductase activity"/>
    <property type="evidence" value="ECO:0007669"/>
    <property type="project" value="InterPro"/>
</dbReference>
<dbReference type="GO" id="GO:0006122">
    <property type="term" value="P:mitochondrial electron transport, ubiquinol to cytochrome c"/>
    <property type="evidence" value="ECO:0007669"/>
    <property type="project" value="TreeGrafter"/>
</dbReference>
<dbReference type="CDD" id="cd00290">
    <property type="entry name" value="cytochrome_b_C"/>
    <property type="match status" value="1"/>
</dbReference>
<dbReference type="CDD" id="cd00284">
    <property type="entry name" value="Cytochrome_b_N"/>
    <property type="match status" value="1"/>
</dbReference>
<dbReference type="FunFam" id="1.20.810.10:FF:000002">
    <property type="entry name" value="Cytochrome b"/>
    <property type="match status" value="1"/>
</dbReference>
<dbReference type="Gene3D" id="1.20.810.10">
    <property type="entry name" value="Cytochrome Bc1 Complex, Chain C"/>
    <property type="match status" value="1"/>
</dbReference>
<dbReference type="InterPro" id="IPR005798">
    <property type="entry name" value="Cyt_b/b6_C"/>
</dbReference>
<dbReference type="InterPro" id="IPR036150">
    <property type="entry name" value="Cyt_b/b6_C_sf"/>
</dbReference>
<dbReference type="InterPro" id="IPR005797">
    <property type="entry name" value="Cyt_b/b6_N"/>
</dbReference>
<dbReference type="InterPro" id="IPR027387">
    <property type="entry name" value="Cytb/b6-like_sf"/>
</dbReference>
<dbReference type="InterPro" id="IPR030689">
    <property type="entry name" value="Cytochrome_b"/>
</dbReference>
<dbReference type="InterPro" id="IPR048260">
    <property type="entry name" value="Cytochrome_b_C_euk/bac"/>
</dbReference>
<dbReference type="InterPro" id="IPR048259">
    <property type="entry name" value="Cytochrome_b_N_euk/bac"/>
</dbReference>
<dbReference type="InterPro" id="IPR016174">
    <property type="entry name" value="Di-haem_cyt_TM"/>
</dbReference>
<dbReference type="PANTHER" id="PTHR19271">
    <property type="entry name" value="CYTOCHROME B"/>
    <property type="match status" value="1"/>
</dbReference>
<dbReference type="PANTHER" id="PTHR19271:SF16">
    <property type="entry name" value="CYTOCHROME B"/>
    <property type="match status" value="1"/>
</dbReference>
<dbReference type="Pfam" id="PF00032">
    <property type="entry name" value="Cytochrom_B_C"/>
    <property type="match status" value="1"/>
</dbReference>
<dbReference type="Pfam" id="PF00033">
    <property type="entry name" value="Cytochrome_B"/>
    <property type="match status" value="1"/>
</dbReference>
<dbReference type="PIRSF" id="PIRSF038885">
    <property type="entry name" value="COB"/>
    <property type="match status" value="1"/>
</dbReference>
<dbReference type="SUPFAM" id="SSF81648">
    <property type="entry name" value="a domain/subunit of cytochrome bc1 complex (Ubiquinol-cytochrome c reductase)"/>
    <property type="match status" value="1"/>
</dbReference>
<dbReference type="SUPFAM" id="SSF81342">
    <property type="entry name" value="Transmembrane di-heme cytochromes"/>
    <property type="match status" value="1"/>
</dbReference>
<dbReference type="PROSITE" id="PS51003">
    <property type="entry name" value="CYTB_CTER"/>
    <property type="match status" value="1"/>
</dbReference>
<dbReference type="PROSITE" id="PS51002">
    <property type="entry name" value="CYTB_NTER"/>
    <property type="match status" value="1"/>
</dbReference>